<sequence>MYLINQNGWIEVICGSMFSGKSEELIRRVRRTQFAKQHAIVFKPCIDNRYSEEDVVSHNGLKVKAVPVSASKDIFEHITEELDVIAIDEVQFFDGDIVEVVQVLANRGYRVIVAGLDQDFRGLPFGQVPQLMAIAEHVTKLQAVCSVCGSPASRTQRLIDGEPAAFDDPIILVGASESYEPRCRHCHAVPANKDK</sequence>
<comment type="catalytic activity">
    <reaction evidence="2">
        <text>thymidine + ATP = dTMP + ADP + H(+)</text>
        <dbReference type="Rhea" id="RHEA:19129"/>
        <dbReference type="ChEBI" id="CHEBI:15378"/>
        <dbReference type="ChEBI" id="CHEBI:17748"/>
        <dbReference type="ChEBI" id="CHEBI:30616"/>
        <dbReference type="ChEBI" id="CHEBI:63528"/>
        <dbReference type="ChEBI" id="CHEBI:456216"/>
        <dbReference type="EC" id="2.7.1.21"/>
    </reaction>
</comment>
<comment type="subunit">
    <text evidence="2 3">Homotetramer.</text>
</comment>
<comment type="subcellular location">
    <subcellularLocation>
        <location evidence="2">Cytoplasm</location>
    </subcellularLocation>
</comment>
<comment type="similarity">
    <text evidence="2">Belongs to the thymidine kinase family.</text>
</comment>
<protein>
    <recommendedName>
        <fullName evidence="2">Thymidine kinase</fullName>
        <ecNumber evidence="2">2.7.1.21</ecNumber>
    </recommendedName>
</protein>
<keyword id="KW-0002">3D-structure</keyword>
<keyword id="KW-0067">ATP-binding</keyword>
<keyword id="KW-0963">Cytoplasm</keyword>
<keyword id="KW-0237">DNA synthesis</keyword>
<keyword id="KW-0418">Kinase</keyword>
<keyword id="KW-0479">Metal-binding</keyword>
<keyword id="KW-0547">Nucleotide-binding</keyword>
<keyword id="KW-1185">Reference proteome</keyword>
<keyword id="KW-0808">Transferase</keyword>
<keyword id="KW-0862">Zinc</keyword>
<reference key="1">
    <citation type="journal article" date="2003" name="Nature">
        <title>Genome sequence of Bacillus cereus and comparative analysis with Bacillus anthracis.</title>
        <authorList>
            <person name="Ivanova N."/>
            <person name="Sorokin A."/>
            <person name="Anderson I."/>
            <person name="Galleron N."/>
            <person name="Candelon B."/>
            <person name="Kapatral V."/>
            <person name="Bhattacharyya A."/>
            <person name="Reznik G."/>
            <person name="Mikhailova N."/>
            <person name="Lapidus A."/>
            <person name="Chu L."/>
            <person name="Mazur M."/>
            <person name="Goltsman E."/>
            <person name="Larsen N."/>
            <person name="D'Souza M."/>
            <person name="Walunas T."/>
            <person name="Grechkin Y."/>
            <person name="Pusch G."/>
            <person name="Haselkorn R."/>
            <person name="Fonstein M."/>
            <person name="Ehrlich S.D."/>
            <person name="Overbeek R."/>
            <person name="Kyrpides N.C."/>
        </authorList>
    </citation>
    <scope>NUCLEOTIDE SEQUENCE [LARGE SCALE GENOMIC DNA]</scope>
    <source>
        <strain>ATCC 14579 / DSM 31 / CCUG 7414 / JCM 2152 / NBRC 15305 / NCIMB 9373 / NCTC 2599 / NRRL B-3711</strain>
    </source>
</reference>
<reference key="2">
    <citation type="journal article" date="2007" name="FEBS J.">
        <title>Structural studies of thymidine kinases from Bacillus anthracis and Bacillus cereus provide insights into quaternary structure and conformational changes upon substrate binding.</title>
        <authorList>
            <person name="Kosinska U."/>
            <person name="Carnrot C."/>
            <person name="Sandrini M.P."/>
            <person name="Clausen A.R."/>
            <person name="Wang L."/>
            <person name="Piskur J."/>
            <person name="Eriksson S."/>
            <person name="Eklund H."/>
        </authorList>
    </citation>
    <scope>X-RAY CRYSTALLOGRAPHY (2.80 ANGSTROMS) IN COMPLEX WITH ZINC IONS AND TTP</scope>
    <scope>SUBUNIT</scope>
</reference>
<evidence type="ECO:0000250" key="1"/>
<evidence type="ECO:0000255" key="2">
    <source>
        <dbReference type="HAMAP-Rule" id="MF_00124"/>
    </source>
</evidence>
<evidence type="ECO:0000269" key="3">
    <source>
    </source>
</evidence>
<accession>Q814U0</accession>
<dbReference type="EC" id="2.7.1.21" evidence="2"/>
<dbReference type="EMBL" id="AE016877">
    <property type="protein sequence ID" value="AAP12193.1"/>
    <property type="molecule type" value="Genomic_DNA"/>
</dbReference>
<dbReference type="RefSeq" id="NP_834992.1">
    <property type="nucleotide sequence ID" value="NC_004722.1"/>
</dbReference>
<dbReference type="RefSeq" id="WP_000280859.1">
    <property type="nucleotide sequence ID" value="NZ_CP138336.1"/>
</dbReference>
<dbReference type="PDB" id="2JA1">
    <property type="method" value="X-ray"/>
    <property type="resolution" value="2.80 A"/>
    <property type="chains" value="A=1-195"/>
</dbReference>
<dbReference type="PDBsum" id="2JA1"/>
<dbReference type="SMR" id="Q814U0"/>
<dbReference type="STRING" id="226900.BC_5330"/>
<dbReference type="KEGG" id="bce:BC5330"/>
<dbReference type="PATRIC" id="fig|226900.8.peg.5503"/>
<dbReference type="HOGENOM" id="CLU_064400_3_0_9"/>
<dbReference type="OrthoDB" id="9781579at2"/>
<dbReference type="Proteomes" id="UP000001417">
    <property type="component" value="Chromosome"/>
</dbReference>
<dbReference type="GO" id="GO:0005829">
    <property type="term" value="C:cytosol"/>
    <property type="evidence" value="ECO:0000318"/>
    <property type="project" value="GO_Central"/>
</dbReference>
<dbReference type="GO" id="GO:0005524">
    <property type="term" value="F:ATP binding"/>
    <property type="evidence" value="ECO:0007669"/>
    <property type="project" value="UniProtKB-UniRule"/>
</dbReference>
<dbReference type="GO" id="GO:0004797">
    <property type="term" value="F:thymidine kinase activity"/>
    <property type="evidence" value="ECO:0000318"/>
    <property type="project" value="GO_Central"/>
</dbReference>
<dbReference type="GO" id="GO:0008270">
    <property type="term" value="F:zinc ion binding"/>
    <property type="evidence" value="ECO:0007669"/>
    <property type="project" value="UniProtKB-UniRule"/>
</dbReference>
<dbReference type="GO" id="GO:0071897">
    <property type="term" value="P:DNA biosynthetic process"/>
    <property type="evidence" value="ECO:0007669"/>
    <property type="project" value="UniProtKB-KW"/>
</dbReference>
<dbReference type="GO" id="GO:0046104">
    <property type="term" value="P:thymidine metabolic process"/>
    <property type="evidence" value="ECO:0000318"/>
    <property type="project" value="GO_Central"/>
</dbReference>
<dbReference type="FunFam" id="3.30.60.20:FF:000026">
    <property type="entry name" value="Thymidine kinase"/>
    <property type="match status" value="1"/>
</dbReference>
<dbReference type="FunFam" id="3.40.50.300:FF:000384">
    <property type="entry name" value="Thymidine kinase"/>
    <property type="match status" value="1"/>
</dbReference>
<dbReference type="Gene3D" id="3.30.60.20">
    <property type="match status" value="1"/>
</dbReference>
<dbReference type="Gene3D" id="3.40.50.300">
    <property type="entry name" value="P-loop containing nucleotide triphosphate hydrolases"/>
    <property type="match status" value="1"/>
</dbReference>
<dbReference type="HAMAP" id="MF_00124">
    <property type="entry name" value="Thymidine_kinase"/>
    <property type="match status" value="1"/>
</dbReference>
<dbReference type="InterPro" id="IPR027417">
    <property type="entry name" value="P-loop_NTPase"/>
</dbReference>
<dbReference type="InterPro" id="IPR001267">
    <property type="entry name" value="Thymidine_kinase"/>
</dbReference>
<dbReference type="InterPro" id="IPR020633">
    <property type="entry name" value="Thymidine_kinase_CS"/>
</dbReference>
<dbReference type="NCBIfam" id="NF003296">
    <property type="entry name" value="PRK04296.1-1"/>
    <property type="match status" value="1"/>
</dbReference>
<dbReference type="PANTHER" id="PTHR11441">
    <property type="entry name" value="THYMIDINE KINASE"/>
    <property type="match status" value="1"/>
</dbReference>
<dbReference type="PANTHER" id="PTHR11441:SF0">
    <property type="entry name" value="THYMIDINE KINASE, CYTOSOLIC"/>
    <property type="match status" value="1"/>
</dbReference>
<dbReference type="Pfam" id="PF00265">
    <property type="entry name" value="TK"/>
    <property type="match status" value="1"/>
</dbReference>
<dbReference type="PIRSF" id="PIRSF035805">
    <property type="entry name" value="TK_cell"/>
    <property type="match status" value="1"/>
</dbReference>
<dbReference type="SUPFAM" id="SSF57716">
    <property type="entry name" value="Glucocorticoid receptor-like (DNA-binding domain)"/>
    <property type="match status" value="1"/>
</dbReference>
<dbReference type="SUPFAM" id="SSF52540">
    <property type="entry name" value="P-loop containing nucleoside triphosphate hydrolases"/>
    <property type="match status" value="1"/>
</dbReference>
<dbReference type="PROSITE" id="PS00603">
    <property type="entry name" value="TK_CELLULAR_TYPE"/>
    <property type="match status" value="1"/>
</dbReference>
<proteinExistence type="evidence at protein level"/>
<organism>
    <name type="scientific">Bacillus cereus (strain ATCC 14579 / DSM 31 / CCUG 7414 / JCM 2152 / NBRC 15305 / NCIMB 9373 / NCTC 2599 / NRRL B-3711)</name>
    <dbReference type="NCBI Taxonomy" id="226900"/>
    <lineage>
        <taxon>Bacteria</taxon>
        <taxon>Bacillati</taxon>
        <taxon>Bacillota</taxon>
        <taxon>Bacilli</taxon>
        <taxon>Bacillales</taxon>
        <taxon>Bacillaceae</taxon>
        <taxon>Bacillus</taxon>
        <taxon>Bacillus cereus group</taxon>
    </lineage>
</organism>
<gene>
    <name evidence="2" type="primary">tdk</name>
    <name type="ordered locus">BC_5330</name>
</gene>
<feature type="chain" id="PRO_0000174955" description="Thymidine kinase">
    <location>
        <begin position="1"/>
        <end position="195"/>
    </location>
</feature>
<feature type="active site" description="Proton acceptor" evidence="2">
    <location>
        <position position="89"/>
    </location>
</feature>
<feature type="binding site" evidence="2">
    <location>
        <begin position="15"/>
        <end position="22"/>
    </location>
    <ligand>
        <name>ATP</name>
        <dbReference type="ChEBI" id="CHEBI:30616"/>
    </ligand>
</feature>
<feature type="binding site" evidence="2">
    <location>
        <begin position="88"/>
        <end position="91"/>
    </location>
    <ligand>
        <name>ATP</name>
        <dbReference type="ChEBI" id="CHEBI:30616"/>
    </ligand>
</feature>
<feature type="binding site">
    <location>
        <position position="120"/>
    </location>
    <ligand>
        <name>substrate</name>
    </ligand>
</feature>
<feature type="binding site">
    <location>
        <position position="145"/>
    </location>
    <ligand>
        <name>Zn(2+)</name>
        <dbReference type="ChEBI" id="CHEBI:29105"/>
    </ligand>
</feature>
<feature type="binding site">
    <location>
        <position position="148"/>
    </location>
    <ligand>
        <name>Zn(2+)</name>
        <dbReference type="ChEBI" id="CHEBI:29105"/>
    </ligand>
</feature>
<feature type="binding site">
    <location>
        <begin position="170"/>
        <end position="174"/>
    </location>
    <ligand>
        <name>substrate</name>
    </ligand>
</feature>
<feature type="binding site" evidence="1">
    <location>
        <position position="179"/>
    </location>
    <ligand>
        <name>substrate</name>
    </ligand>
</feature>
<feature type="binding site">
    <location>
        <position position="183"/>
    </location>
    <ligand>
        <name>Zn(2+)</name>
        <dbReference type="ChEBI" id="CHEBI:29105"/>
    </ligand>
</feature>
<feature type="binding site">
    <location>
        <position position="186"/>
    </location>
    <ligand>
        <name>Zn(2+)</name>
        <dbReference type="ChEBI" id="CHEBI:29105"/>
    </ligand>
</feature>
<name>KITH_BACCR</name>